<reference key="1">
    <citation type="journal article" date="2011" name="J. Bacteriol.">
        <title>Genome of Ochrobactrum anthropi ATCC 49188 T, a versatile opportunistic pathogen and symbiont of several eukaryotic hosts.</title>
        <authorList>
            <person name="Chain P.S."/>
            <person name="Lang D.M."/>
            <person name="Comerci D.J."/>
            <person name="Malfatti S.A."/>
            <person name="Vergez L.M."/>
            <person name="Shin M."/>
            <person name="Ugalde R.A."/>
            <person name="Garcia E."/>
            <person name="Tolmasky M.E."/>
        </authorList>
    </citation>
    <scope>NUCLEOTIDE SEQUENCE [LARGE SCALE GENOMIC DNA]</scope>
    <source>
        <strain>ATCC 49188 / DSM 6882 / CCUG 24695 / JCM 21032 / LMG 3331 / NBRC 15819 / NCTC 12168 / Alc 37</strain>
    </source>
</reference>
<protein>
    <recommendedName>
        <fullName evidence="1">Imidazoleglycerol-phosphate dehydratase</fullName>
        <shortName evidence="1">IGPD</shortName>
        <ecNumber evidence="1">4.2.1.19</ecNumber>
    </recommendedName>
</protein>
<gene>
    <name evidence="1" type="primary">hisB</name>
    <name type="ordered locus">Oant_0838</name>
</gene>
<organism>
    <name type="scientific">Brucella anthropi (strain ATCC 49188 / DSM 6882 / CCUG 24695 / JCM 21032 / LMG 3331 / NBRC 15819 / NCTC 12168 / Alc 37)</name>
    <name type="common">Ochrobactrum anthropi</name>
    <dbReference type="NCBI Taxonomy" id="439375"/>
    <lineage>
        <taxon>Bacteria</taxon>
        <taxon>Pseudomonadati</taxon>
        <taxon>Pseudomonadota</taxon>
        <taxon>Alphaproteobacteria</taxon>
        <taxon>Hyphomicrobiales</taxon>
        <taxon>Brucellaceae</taxon>
        <taxon>Brucella/Ochrobactrum group</taxon>
        <taxon>Brucella</taxon>
    </lineage>
</organism>
<dbReference type="EC" id="4.2.1.19" evidence="1"/>
<dbReference type="EMBL" id="CP000758">
    <property type="protein sequence ID" value="ABS13560.1"/>
    <property type="molecule type" value="Genomic_DNA"/>
</dbReference>
<dbReference type="RefSeq" id="WP_012091061.1">
    <property type="nucleotide sequence ID" value="NC_009667.1"/>
</dbReference>
<dbReference type="SMR" id="A6WX56"/>
<dbReference type="STRING" id="439375.Oant_0838"/>
<dbReference type="KEGG" id="oan:Oant_0838"/>
<dbReference type="PATRIC" id="fig|439375.7.peg.883"/>
<dbReference type="eggNOG" id="COG0131">
    <property type="taxonomic scope" value="Bacteria"/>
</dbReference>
<dbReference type="HOGENOM" id="CLU_044308_3_0_5"/>
<dbReference type="PhylomeDB" id="A6WX56"/>
<dbReference type="UniPathway" id="UPA00031">
    <property type="reaction ID" value="UER00011"/>
</dbReference>
<dbReference type="Proteomes" id="UP000002301">
    <property type="component" value="Chromosome 1"/>
</dbReference>
<dbReference type="GO" id="GO:0005737">
    <property type="term" value="C:cytoplasm"/>
    <property type="evidence" value="ECO:0007669"/>
    <property type="project" value="UniProtKB-SubCell"/>
</dbReference>
<dbReference type="GO" id="GO:0004424">
    <property type="term" value="F:imidazoleglycerol-phosphate dehydratase activity"/>
    <property type="evidence" value="ECO:0007669"/>
    <property type="project" value="UniProtKB-UniRule"/>
</dbReference>
<dbReference type="GO" id="GO:0000105">
    <property type="term" value="P:L-histidine biosynthetic process"/>
    <property type="evidence" value="ECO:0007669"/>
    <property type="project" value="UniProtKB-UniRule"/>
</dbReference>
<dbReference type="CDD" id="cd07914">
    <property type="entry name" value="IGPD"/>
    <property type="match status" value="1"/>
</dbReference>
<dbReference type="FunFam" id="3.30.230.40:FF:000001">
    <property type="entry name" value="Imidazoleglycerol-phosphate dehydratase HisB"/>
    <property type="match status" value="1"/>
</dbReference>
<dbReference type="FunFam" id="3.30.230.40:FF:000003">
    <property type="entry name" value="Imidazoleglycerol-phosphate dehydratase HisB"/>
    <property type="match status" value="1"/>
</dbReference>
<dbReference type="Gene3D" id="3.30.230.40">
    <property type="entry name" value="Imidazole glycerol phosphate dehydratase, domain 1"/>
    <property type="match status" value="2"/>
</dbReference>
<dbReference type="HAMAP" id="MF_00076">
    <property type="entry name" value="HisB"/>
    <property type="match status" value="1"/>
</dbReference>
<dbReference type="InterPro" id="IPR038494">
    <property type="entry name" value="IGPD_sf"/>
</dbReference>
<dbReference type="InterPro" id="IPR000807">
    <property type="entry name" value="ImidazoleglycerolP_deHydtase"/>
</dbReference>
<dbReference type="InterPro" id="IPR020565">
    <property type="entry name" value="ImidazoleglycerP_deHydtase_CS"/>
</dbReference>
<dbReference type="InterPro" id="IPR020568">
    <property type="entry name" value="Ribosomal_Su5_D2-typ_SF"/>
</dbReference>
<dbReference type="NCBIfam" id="NF002109">
    <property type="entry name" value="PRK00951.1-5"/>
    <property type="match status" value="1"/>
</dbReference>
<dbReference type="NCBIfam" id="NF002111">
    <property type="entry name" value="PRK00951.2-1"/>
    <property type="match status" value="1"/>
</dbReference>
<dbReference type="NCBIfam" id="NF002114">
    <property type="entry name" value="PRK00951.2-4"/>
    <property type="match status" value="1"/>
</dbReference>
<dbReference type="PANTHER" id="PTHR23133:SF2">
    <property type="entry name" value="IMIDAZOLEGLYCEROL-PHOSPHATE DEHYDRATASE"/>
    <property type="match status" value="1"/>
</dbReference>
<dbReference type="PANTHER" id="PTHR23133">
    <property type="entry name" value="IMIDAZOLEGLYCEROL-PHOSPHATE DEHYDRATASE HIS7"/>
    <property type="match status" value="1"/>
</dbReference>
<dbReference type="Pfam" id="PF00475">
    <property type="entry name" value="IGPD"/>
    <property type="match status" value="1"/>
</dbReference>
<dbReference type="SUPFAM" id="SSF54211">
    <property type="entry name" value="Ribosomal protein S5 domain 2-like"/>
    <property type="match status" value="2"/>
</dbReference>
<dbReference type="PROSITE" id="PS00954">
    <property type="entry name" value="IGP_DEHYDRATASE_1"/>
    <property type="match status" value="1"/>
</dbReference>
<dbReference type="PROSITE" id="PS00955">
    <property type="entry name" value="IGP_DEHYDRATASE_2"/>
    <property type="match status" value="1"/>
</dbReference>
<proteinExistence type="inferred from homology"/>
<name>HIS7_BRUA4</name>
<feature type="chain" id="PRO_1000010317" description="Imidazoleglycerol-phosphate dehydratase">
    <location>
        <begin position="1"/>
        <end position="202"/>
    </location>
</feature>
<accession>A6WX56</accession>
<sequence length="202" mass="22047">MTAESTRKASIERSTKETSIAVSVDLDGVGKFDITTGVGFFDHMLEQLSRHSLIDMRVMAKGDLHIDDHHTVEDTGIALGQAIAKALGERRGIVRYASMDLAMDDTLTGAAVDVSGRAFLVWNVNFTTSKIGTFDTELVREFFQAFAMNAGITLHINNHYGANNHHIAESIFKAVARVLRTALETDPRQKDAIPSTKGSLKG</sequence>
<evidence type="ECO:0000255" key="1">
    <source>
        <dbReference type="HAMAP-Rule" id="MF_00076"/>
    </source>
</evidence>
<comment type="catalytic activity">
    <reaction evidence="1">
        <text>D-erythro-1-(imidazol-4-yl)glycerol 3-phosphate = 3-(imidazol-4-yl)-2-oxopropyl phosphate + H2O</text>
        <dbReference type="Rhea" id="RHEA:11040"/>
        <dbReference type="ChEBI" id="CHEBI:15377"/>
        <dbReference type="ChEBI" id="CHEBI:57766"/>
        <dbReference type="ChEBI" id="CHEBI:58278"/>
        <dbReference type="EC" id="4.2.1.19"/>
    </reaction>
</comment>
<comment type="pathway">
    <text evidence="1">Amino-acid biosynthesis; L-histidine biosynthesis; L-histidine from 5-phospho-alpha-D-ribose 1-diphosphate: step 6/9.</text>
</comment>
<comment type="subcellular location">
    <subcellularLocation>
        <location evidence="1">Cytoplasm</location>
    </subcellularLocation>
</comment>
<comment type="similarity">
    <text evidence="1">Belongs to the imidazoleglycerol-phosphate dehydratase family.</text>
</comment>
<keyword id="KW-0028">Amino-acid biosynthesis</keyword>
<keyword id="KW-0963">Cytoplasm</keyword>
<keyword id="KW-0368">Histidine biosynthesis</keyword>
<keyword id="KW-0456">Lyase</keyword>
<keyword id="KW-1185">Reference proteome</keyword>